<reference key="1">
    <citation type="journal article" date="2005" name="J. Antibiot.">
        <title>Biosynthesis of 2-deoxystreptamine by three crucial enzymes in Streptomyces fradiae NBRC 12773.</title>
        <authorList>
            <person name="Kudo F."/>
            <person name="Yamamoto Y."/>
            <person name="Yokoyama K."/>
            <person name="Eguchi T."/>
            <person name="Kakinuma K."/>
        </authorList>
    </citation>
    <scope>NUCLEOTIDE SEQUENCE [GENOMIC DNA]</scope>
    <source>
        <strain>ATCC 10745 / CBS 498.68 / DSM 40063 / JCM 4133 / NBRC 12773 / NCIMB 8233 / NRRL B-1195 / VKM Ac-150</strain>
    </source>
</reference>
<reference key="2">
    <citation type="journal article" date="2005" name="Org. Biomol. Chem.">
        <title>The neomycin biosynthetic gene cluster of Streptomyces fradiae NCIMB 8233: characterisation of an aminotransferase involved in the formation of 2-deoxystreptamine.</title>
        <authorList>
            <person name="Huang F."/>
            <person name="Haydock S.F."/>
            <person name="Mironenko T."/>
            <person name="Spiteller D."/>
            <person name="Li Y."/>
            <person name="Spencer J.B."/>
        </authorList>
    </citation>
    <scope>NUCLEOTIDE SEQUENCE [GENOMIC DNA]</scope>
    <source>
        <strain>ATCC 10745 / CBS 498.68 / DSM 40063 / JCM 4133 / NBRC 12773 / NCIMB 8233 / NRRL B-1195 / VKM Ac-150</strain>
    </source>
</reference>
<reference key="3">
    <citation type="submission" date="2004-02" db="EMBL/GenBank/DDBJ databases">
        <title>Analysis and comparison of biosynthetic gene clusters for the 2-deoxy-inosamine containing aminoglycoside antibiotics ribostamycin, neomycin, lividomycin, paromomycin and butirosin.</title>
        <authorList>
            <person name="Aboshanab K.M."/>
            <person name="Schmidt-Beissner H."/>
            <person name="Wehmeier U.F."/>
            <person name="Piepersberg W."/>
            <person name="Welzel K."/>
            <person name="Vente A."/>
        </authorList>
    </citation>
    <scope>NUCLEOTIDE SEQUENCE [GENOMIC DNA]</scope>
    <source>
        <strain>ATCC 10745 / CBS 498.68 / DSM 40063 / JCM 4133 / NBRC 12773 / NCIMB 8233 / NRRL B-1195 / VKM Ac-150</strain>
    </source>
</reference>
<reference key="4">
    <citation type="journal article" date="2008" name="ChemBioChem">
        <title>Involvement of two distinct N-acetylglucosaminyltransferases and a dual-function deacetylase in neomycin biosynthesis.</title>
        <authorList>
            <person name="Yokoyama K."/>
            <person name="Yamamoto Y."/>
            <person name="Kudo F."/>
            <person name="Eguchi T."/>
        </authorList>
    </citation>
    <scope>FUNCTION</scope>
    <scope>CATALYTIC ACTIVITY</scope>
    <scope>COFACTOR</scope>
    <scope>PATHWAY</scope>
</reference>
<organism>
    <name type="scientific">Streptomyces fradiae</name>
    <name type="common">Streptomyces roseoflavus</name>
    <dbReference type="NCBI Taxonomy" id="1906"/>
    <lineage>
        <taxon>Bacteria</taxon>
        <taxon>Bacillati</taxon>
        <taxon>Actinomycetota</taxon>
        <taxon>Actinomycetes</taxon>
        <taxon>Kitasatosporales</taxon>
        <taxon>Streptomycetaceae</taxon>
        <taxon>Streptomyces</taxon>
    </lineage>
</organism>
<protein>
    <recommendedName>
        <fullName>UDP-GlcNAc:ribostamycin N-acetylglucosaminyltransferase</fullName>
        <ecNumber>2.4.1.285</ecNumber>
    </recommendedName>
    <alternativeName>
        <fullName>Neomycin biosynthesis protein 15</fullName>
        <shortName>Neo-15</shortName>
    </alternativeName>
    <alternativeName>
        <fullName>Neomycin biosynthesis protein K</fullName>
    </alternativeName>
</protein>
<feature type="chain" id="PRO_0000421743" description="UDP-GlcNAc:ribostamycin N-acetylglucosaminyltransferase">
    <location>
        <begin position="1"/>
        <end position="366"/>
    </location>
</feature>
<feature type="region of interest" description="Disordered" evidence="1">
    <location>
        <begin position="342"/>
        <end position="366"/>
    </location>
</feature>
<feature type="compositionally biased region" description="Low complexity" evidence="1">
    <location>
        <begin position="342"/>
        <end position="352"/>
    </location>
</feature>
<feature type="compositionally biased region" description="Basic and acidic residues" evidence="1">
    <location>
        <begin position="357"/>
        <end position="366"/>
    </location>
</feature>
<feature type="sequence conflict" description="In Ref. 2; CAH58698." evidence="3" ref="2">
    <original>D</original>
    <variation>H</variation>
    <location>
        <position position="174"/>
    </location>
</feature>
<evidence type="ECO:0000256" key="1">
    <source>
        <dbReference type="SAM" id="MobiDB-lite"/>
    </source>
</evidence>
<evidence type="ECO:0000269" key="2">
    <source>
    </source>
</evidence>
<evidence type="ECO:0000305" key="3"/>
<comment type="function">
    <text evidence="2">Glycosyltransferase involved in the biosynthesis of neomycin by mediating glycosylation of ribostamycin with UDP-GlcNAc as a sugar donor to generate 2'''-acetyl-6'''-hydroxyneomycin C.</text>
</comment>
<comment type="catalytic activity">
    <reaction evidence="2">
        <text>ribostamycin + UDP-N-acetyl-alpha-D-glucosamine = 2'''-acetyl-6'''-hydroxyneomycin C + UDP + H(+)</text>
        <dbReference type="Rhea" id="RHEA:33951"/>
        <dbReference type="ChEBI" id="CHEBI:15378"/>
        <dbReference type="ChEBI" id="CHEBI:57705"/>
        <dbReference type="ChEBI" id="CHEBI:58223"/>
        <dbReference type="ChEBI" id="CHEBI:65028"/>
        <dbReference type="ChEBI" id="CHEBI:65030"/>
        <dbReference type="EC" id="2.4.1.285"/>
    </reaction>
</comment>
<comment type="cofactor">
    <cofactor evidence="2">
        <name>a divalent metal cation</name>
        <dbReference type="ChEBI" id="CHEBI:60240"/>
    </cofactor>
</comment>
<comment type="pathway">
    <text evidence="2">Antibiotic biosynthesis; neomycin biosynthesis.</text>
</comment>
<comment type="similarity">
    <text evidence="3">Belongs to the glycosyltransferase group 1 family. Glycosyltransferase 4 subfamily.</text>
</comment>
<dbReference type="EC" id="2.4.1.285"/>
<dbReference type="EMBL" id="AB211959">
    <property type="protein sequence ID" value="BAD95828.1"/>
    <property type="molecule type" value="Genomic_DNA"/>
</dbReference>
<dbReference type="EMBL" id="AJ843080">
    <property type="protein sequence ID" value="CAH58698.1"/>
    <property type="molecule type" value="Genomic_DNA"/>
</dbReference>
<dbReference type="EMBL" id="AJ629247">
    <property type="protein sequence ID" value="CAF33320.1"/>
    <property type="molecule type" value="Genomic_DNA"/>
</dbReference>
<dbReference type="RefSeq" id="WP_031132485.1">
    <property type="nucleotide sequence ID" value="NZ_MUNC01000172.1"/>
</dbReference>
<dbReference type="CAZy" id="GT4">
    <property type="family name" value="Glycosyltransferase Family 4"/>
</dbReference>
<dbReference type="KEGG" id="ag:BAD95828"/>
<dbReference type="BioCyc" id="MetaCyc:MONOMER-17261"/>
<dbReference type="UniPathway" id="UPA00969"/>
<dbReference type="GO" id="GO:0016758">
    <property type="term" value="F:hexosyltransferase activity"/>
    <property type="evidence" value="ECO:0000314"/>
    <property type="project" value="UniProtKB"/>
</dbReference>
<dbReference type="GO" id="GO:1901158">
    <property type="term" value="P:neomycin biosynthetic process"/>
    <property type="evidence" value="ECO:0000314"/>
    <property type="project" value="UniProtKB"/>
</dbReference>
<dbReference type="Gene3D" id="3.40.50.2000">
    <property type="entry name" value="Glycogen Phosphorylase B"/>
    <property type="match status" value="1"/>
</dbReference>
<dbReference type="SUPFAM" id="SSF53756">
    <property type="entry name" value="UDP-Glycosyltransferase/glycogen phosphorylase"/>
    <property type="match status" value="1"/>
</dbReference>
<gene>
    <name type="primary">neoK</name>
    <name type="synonym">neo15</name>
    <name type="synonym">neoF</name>
</gene>
<keyword id="KW-0045">Antibiotic biosynthesis</keyword>
<keyword id="KW-0328">Glycosyltransferase</keyword>
<keyword id="KW-0808">Transferase</keyword>
<name>NEOK_STRFR</name>
<proteinExistence type="evidence at protein level"/>
<sequence length="366" mass="39257">MAEAPAGRALFEIYDEGFDSPSWGGVETALWHLSRSLREAGTEAEFYRSSEGADLDALAARVERDRVDAVFPLVESDLFEGAAWRRLPALHARTVRVWHDVSRLSADLSAPPPCPVHARVPALPGAPVAEGCPARGAHPEGPMREVFLGEWPWTRCFPRRSVIPWAADHVPAKDLCDPSGPVVLQLGKIDTVDAERCLRRLTGAGVALRVVFATWSRRGREARELVRAHQGAGRRVEVLDAYDIRTDWERVFGGASLFLLPSVFHETYNFAAAEAVQLGVPVAALGEGGNLPRFASLTAPTPDALVDRLLAGGGAVAPRPRPAAGWRDVAARYAEVIREHPAAGAGPAVPAGAGEGRGGREEEHGG</sequence>
<accession>Q53U11</accession>
<accession>Q4W2N8</accession>